<keyword id="KW-0963">Cytoplasm</keyword>
<keyword id="KW-0479">Metal-binding</keyword>
<keyword id="KW-0520">NAD</keyword>
<keyword id="KW-0560">Oxidoreductase</keyword>
<keyword id="KW-0862">Zinc</keyword>
<sequence length="341" mass="37333">MKALSKLKAEEGIWMTDVPQPELGHNDIMIKIRKTAICGTDVHIYNWDEWSQKTIPVPMVVGHEYVGEVVAIGQEVKGFNIGDRVSGEGHITCGHCRNCRGGRTHLCRNTVGVGVNRPGSFAEYLVIPAFNAFKIPDNISDELAAIFDPFGNAVHTALSFDLVGEDVLVSGAGPIGIMAAAVCKHVGARHVVITDVNEYRLDLARKMGVTRAVNVSKENLNDVMTELGMTEGFDVGLEMSGAPPAFRSLLNSMNHGGRIAMLGIPPSDMSIDWNQVIFKGLFIKGIYGREMFETWYKMAALIQSGLDLTPIITHRFPIDEFQQGFDAMRSGKSGKVVLSWD</sequence>
<evidence type="ECO:0000255" key="1">
    <source>
        <dbReference type="HAMAP-Rule" id="MF_00627"/>
    </source>
</evidence>
<gene>
    <name evidence="1" type="primary">tdh</name>
    <name type="ordered locus">YPTB0057</name>
</gene>
<comment type="function">
    <text evidence="1">Catalyzes the NAD(+)-dependent oxidation of L-threonine to 2-amino-3-ketobutyrate.</text>
</comment>
<comment type="catalytic activity">
    <reaction evidence="1">
        <text>L-threonine + NAD(+) = (2S)-2-amino-3-oxobutanoate + NADH + H(+)</text>
        <dbReference type="Rhea" id="RHEA:13161"/>
        <dbReference type="ChEBI" id="CHEBI:15378"/>
        <dbReference type="ChEBI" id="CHEBI:57540"/>
        <dbReference type="ChEBI" id="CHEBI:57926"/>
        <dbReference type="ChEBI" id="CHEBI:57945"/>
        <dbReference type="ChEBI" id="CHEBI:78948"/>
        <dbReference type="EC" id="1.1.1.103"/>
    </reaction>
</comment>
<comment type="cofactor">
    <cofactor evidence="1">
        <name>Zn(2+)</name>
        <dbReference type="ChEBI" id="CHEBI:29105"/>
    </cofactor>
    <text evidence="1">Binds 2 Zn(2+) ions per subunit.</text>
</comment>
<comment type="pathway">
    <text evidence="1">Amino-acid degradation; L-threonine degradation via oxydo-reductase pathway; glycine from L-threonine: step 1/2.</text>
</comment>
<comment type="subunit">
    <text evidence="1">Homotetramer.</text>
</comment>
<comment type="subcellular location">
    <subcellularLocation>
        <location evidence="1">Cytoplasm</location>
    </subcellularLocation>
</comment>
<comment type="similarity">
    <text evidence="1">Belongs to the zinc-containing alcohol dehydrogenase family.</text>
</comment>
<proteinExistence type="inferred from homology"/>
<reference key="1">
    <citation type="journal article" date="2004" name="Proc. Natl. Acad. Sci. U.S.A.">
        <title>Insights into the evolution of Yersinia pestis through whole-genome comparison with Yersinia pseudotuberculosis.</title>
        <authorList>
            <person name="Chain P.S.G."/>
            <person name="Carniel E."/>
            <person name="Larimer F.W."/>
            <person name="Lamerdin J."/>
            <person name="Stoutland P.O."/>
            <person name="Regala W.M."/>
            <person name="Georgescu A.M."/>
            <person name="Vergez L.M."/>
            <person name="Land M.L."/>
            <person name="Motin V.L."/>
            <person name="Brubaker R.R."/>
            <person name="Fowler J."/>
            <person name="Hinnebusch J."/>
            <person name="Marceau M."/>
            <person name="Medigue C."/>
            <person name="Simonet M."/>
            <person name="Chenal-Francisque V."/>
            <person name="Souza B."/>
            <person name="Dacheux D."/>
            <person name="Elliott J.M."/>
            <person name="Derbise A."/>
            <person name="Hauser L.J."/>
            <person name="Garcia E."/>
        </authorList>
    </citation>
    <scope>NUCLEOTIDE SEQUENCE [LARGE SCALE GENOMIC DNA]</scope>
    <source>
        <strain>IP32953</strain>
    </source>
</reference>
<name>TDH_YERPS</name>
<feature type="chain" id="PRO_0000160874" description="L-threonine 3-dehydrogenase">
    <location>
        <begin position="1"/>
        <end position="341"/>
    </location>
</feature>
<feature type="active site" description="Charge relay system" evidence="1">
    <location>
        <position position="40"/>
    </location>
</feature>
<feature type="active site" description="Charge relay system" evidence="1">
    <location>
        <position position="43"/>
    </location>
</feature>
<feature type="binding site" evidence="1">
    <location>
        <position position="38"/>
    </location>
    <ligand>
        <name>Zn(2+)</name>
        <dbReference type="ChEBI" id="CHEBI:29105"/>
        <label>1</label>
        <note>catalytic</note>
    </ligand>
</feature>
<feature type="binding site" evidence="1">
    <location>
        <position position="63"/>
    </location>
    <ligand>
        <name>Zn(2+)</name>
        <dbReference type="ChEBI" id="CHEBI:29105"/>
        <label>1</label>
        <note>catalytic</note>
    </ligand>
</feature>
<feature type="binding site" evidence="1">
    <location>
        <position position="64"/>
    </location>
    <ligand>
        <name>Zn(2+)</name>
        <dbReference type="ChEBI" id="CHEBI:29105"/>
        <label>1</label>
        <note>catalytic</note>
    </ligand>
</feature>
<feature type="binding site" evidence="1">
    <location>
        <position position="93"/>
    </location>
    <ligand>
        <name>Zn(2+)</name>
        <dbReference type="ChEBI" id="CHEBI:29105"/>
        <label>2</label>
    </ligand>
</feature>
<feature type="binding site" evidence="1">
    <location>
        <position position="96"/>
    </location>
    <ligand>
        <name>Zn(2+)</name>
        <dbReference type="ChEBI" id="CHEBI:29105"/>
        <label>2</label>
    </ligand>
</feature>
<feature type="binding site" evidence="1">
    <location>
        <position position="99"/>
    </location>
    <ligand>
        <name>Zn(2+)</name>
        <dbReference type="ChEBI" id="CHEBI:29105"/>
        <label>2</label>
    </ligand>
</feature>
<feature type="binding site" evidence="1">
    <location>
        <position position="107"/>
    </location>
    <ligand>
        <name>Zn(2+)</name>
        <dbReference type="ChEBI" id="CHEBI:29105"/>
        <label>2</label>
    </ligand>
</feature>
<feature type="binding site" evidence="1">
    <location>
        <position position="175"/>
    </location>
    <ligand>
        <name>NAD(+)</name>
        <dbReference type="ChEBI" id="CHEBI:57540"/>
    </ligand>
</feature>
<feature type="binding site" evidence="1">
    <location>
        <position position="195"/>
    </location>
    <ligand>
        <name>NAD(+)</name>
        <dbReference type="ChEBI" id="CHEBI:57540"/>
    </ligand>
</feature>
<feature type="binding site" evidence="1">
    <location>
        <position position="200"/>
    </location>
    <ligand>
        <name>NAD(+)</name>
        <dbReference type="ChEBI" id="CHEBI:57540"/>
    </ligand>
</feature>
<feature type="binding site" evidence="1">
    <location>
        <begin position="262"/>
        <end position="264"/>
    </location>
    <ligand>
        <name>NAD(+)</name>
        <dbReference type="ChEBI" id="CHEBI:57540"/>
    </ligand>
</feature>
<feature type="binding site" evidence="1">
    <location>
        <begin position="286"/>
        <end position="287"/>
    </location>
    <ligand>
        <name>NAD(+)</name>
        <dbReference type="ChEBI" id="CHEBI:57540"/>
    </ligand>
</feature>
<feature type="site" description="Important for catalytic activity for the proton relay mechanism but does not participate directly in the coordination of zinc atom" evidence="1">
    <location>
        <position position="148"/>
    </location>
</feature>
<protein>
    <recommendedName>
        <fullName evidence="1">L-threonine 3-dehydrogenase</fullName>
        <shortName evidence="1">TDH</shortName>
        <ecNumber evidence="1">1.1.1.103</ecNumber>
    </recommendedName>
</protein>
<dbReference type="EC" id="1.1.1.103" evidence="1"/>
<dbReference type="EMBL" id="BX936398">
    <property type="protein sequence ID" value="CAH19297.1"/>
    <property type="molecule type" value="Genomic_DNA"/>
</dbReference>
<dbReference type="RefSeq" id="WP_011191451.1">
    <property type="nucleotide sequence ID" value="NC_006155.1"/>
</dbReference>
<dbReference type="SMR" id="Q66GC5"/>
<dbReference type="GeneID" id="96663541"/>
<dbReference type="KEGG" id="ypo:BZ17_2538"/>
<dbReference type="KEGG" id="yps:YPTB0057"/>
<dbReference type="PATRIC" id="fig|273123.14.peg.2663"/>
<dbReference type="UniPathway" id="UPA00046">
    <property type="reaction ID" value="UER00505"/>
</dbReference>
<dbReference type="Proteomes" id="UP000001011">
    <property type="component" value="Chromosome"/>
</dbReference>
<dbReference type="GO" id="GO:0005737">
    <property type="term" value="C:cytoplasm"/>
    <property type="evidence" value="ECO:0007669"/>
    <property type="project" value="UniProtKB-SubCell"/>
</dbReference>
<dbReference type="GO" id="GO:0008743">
    <property type="term" value="F:L-threonine 3-dehydrogenase activity"/>
    <property type="evidence" value="ECO:0007669"/>
    <property type="project" value="UniProtKB-UniRule"/>
</dbReference>
<dbReference type="GO" id="GO:0008270">
    <property type="term" value="F:zinc ion binding"/>
    <property type="evidence" value="ECO:0007669"/>
    <property type="project" value="UniProtKB-UniRule"/>
</dbReference>
<dbReference type="GO" id="GO:0019518">
    <property type="term" value="P:L-threonine catabolic process to glycine"/>
    <property type="evidence" value="ECO:0007669"/>
    <property type="project" value="UniProtKB-UniPathway"/>
</dbReference>
<dbReference type="FunFam" id="3.40.50.720:FF:000059">
    <property type="entry name" value="L-threonine 3-dehydrogenase"/>
    <property type="match status" value="1"/>
</dbReference>
<dbReference type="Gene3D" id="3.90.180.10">
    <property type="entry name" value="Medium-chain alcohol dehydrogenases, catalytic domain"/>
    <property type="match status" value="1"/>
</dbReference>
<dbReference type="Gene3D" id="3.40.50.720">
    <property type="entry name" value="NAD(P)-binding Rossmann-like Domain"/>
    <property type="match status" value="1"/>
</dbReference>
<dbReference type="HAMAP" id="MF_00627">
    <property type="entry name" value="Thr_dehydrog"/>
    <property type="match status" value="1"/>
</dbReference>
<dbReference type="InterPro" id="IPR013149">
    <property type="entry name" value="ADH-like_C"/>
</dbReference>
<dbReference type="InterPro" id="IPR013154">
    <property type="entry name" value="ADH-like_N"/>
</dbReference>
<dbReference type="InterPro" id="IPR002328">
    <property type="entry name" value="ADH_Zn_CS"/>
</dbReference>
<dbReference type="InterPro" id="IPR011032">
    <property type="entry name" value="GroES-like_sf"/>
</dbReference>
<dbReference type="InterPro" id="IPR004627">
    <property type="entry name" value="L-Threonine_3-DHase"/>
</dbReference>
<dbReference type="InterPro" id="IPR036291">
    <property type="entry name" value="NAD(P)-bd_dom_sf"/>
</dbReference>
<dbReference type="InterPro" id="IPR020843">
    <property type="entry name" value="PKS_ER"/>
</dbReference>
<dbReference type="InterPro" id="IPR050129">
    <property type="entry name" value="Zn_alcohol_dh"/>
</dbReference>
<dbReference type="NCBIfam" id="NF003808">
    <property type="entry name" value="PRK05396.1"/>
    <property type="match status" value="1"/>
</dbReference>
<dbReference type="NCBIfam" id="TIGR00692">
    <property type="entry name" value="tdh"/>
    <property type="match status" value="1"/>
</dbReference>
<dbReference type="PANTHER" id="PTHR43401">
    <property type="entry name" value="L-THREONINE 3-DEHYDROGENASE"/>
    <property type="match status" value="1"/>
</dbReference>
<dbReference type="PANTHER" id="PTHR43401:SF2">
    <property type="entry name" value="L-THREONINE 3-DEHYDROGENASE"/>
    <property type="match status" value="1"/>
</dbReference>
<dbReference type="Pfam" id="PF08240">
    <property type="entry name" value="ADH_N"/>
    <property type="match status" value="1"/>
</dbReference>
<dbReference type="Pfam" id="PF00107">
    <property type="entry name" value="ADH_zinc_N"/>
    <property type="match status" value="1"/>
</dbReference>
<dbReference type="SMART" id="SM00829">
    <property type="entry name" value="PKS_ER"/>
    <property type="match status" value="1"/>
</dbReference>
<dbReference type="SUPFAM" id="SSF50129">
    <property type="entry name" value="GroES-like"/>
    <property type="match status" value="1"/>
</dbReference>
<dbReference type="SUPFAM" id="SSF51735">
    <property type="entry name" value="NAD(P)-binding Rossmann-fold domains"/>
    <property type="match status" value="1"/>
</dbReference>
<dbReference type="PROSITE" id="PS00059">
    <property type="entry name" value="ADH_ZINC"/>
    <property type="match status" value="1"/>
</dbReference>
<organism>
    <name type="scientific">Yersinia pseudotuberculosis serotype I (strain IP32953)</name>
    <dbReference type="NCBI Taxonomy" id="273123"/>
    <lineage>
        <taxon>Bacteria</taxon>
        <taxon>Pseudomonadati</taxon>
        <taxon>Pseudomonadota</taxon>
        <taxon>Gammaproteobacteria</taxon>
        <taxon>Enterobacterales</taxon>
        <taxon>Yersiniaceae</taxon>
        <taxon>Yersinia</taxon>
    </lineage>
</organism>
<accession>Q66GC5</accession>